<dbReference type="EC" id="4.3.2.1" evidence="1"/>
<dbReference type="EMBL" id="CP000481">
    <property type="protein sequence ID" value="ABK53028.1"/>
    <property type="molecule type" value="Genomic_DNA"/>
</dbReference>
<dbReference type="RefSeq" id="WP_011720091.1">
    <property type="nucleotide sequence ID" value="NC_008578.1"/>
</dbReference>
<dbReference type="SMR" id="A0LUB8"/>
<dbReference type="FunCoup" id="A0LUB8">
    <property type="interactions" value="309"/>
</dbReference>
<dbReference type="STRING" id="351607.Acel_1256"/>
<dbReference type="KEGG" id="ace:Acel_1256"/>
<dbReference type="eggNOG" id="COG0165">
    <property type="taxonomic scope" value="Bacteria"/>
</dbReference>
<dbReference type="HOGENOM" id="CLU_027272_2_2_11"/>
<dbReference type="InParanoid" id="A0LUB8"/>
<dbReference type="OrthoDB" id="9769623at2"/>
<dbReference type="UniPathway" id="UPA00068">
    <property type="reaction ID" value="UER00114"/>
</dbReference>
<dbReference type="Proteomes" id="UP000008221">
    <property type="component" value="Chromosome"/>
</dbReference>
<dbReference type="GO" id="GO:0005829">
    <property type="term" value="C:cytosol"/>
    <property type="evidence" value="ECO:0007669"/>
    <property type="project" value="TreeGrafter"/>
</dbReference>
<dbReference type="GO" id="GO:0004056">
    <property type="term" value="F:argininosuccinate lyase activity"/>
    <property type="evidence" value="ECO:0007669"/>
    <property type="project" value="UniProtKB-UniRule"/>
</dbReference>
<dbReference type="GO" id="GO:0042450">
    <property type="term" value="P:arginine biosynthetic process via ornithine"/>
    <property type="evidence" value="ECO:0007669"/>
    <property type="project" value="InterPro"/>
</dbReference>
<dbReference type="GO" id="GO:0006526">
    <property type="term" value="P:L-arginine biosynthetic process"/>
    <property type="evidence" value="ECO:0007669"/>
    <property type="project" value="UniProtKB-UniRule"/>
</dbReference>
<dbReference type="CDD" id="cd01359">
    <property type="entry name" value="Argininosuccinate_lyase"/>
    <property type="match status" value="1"/>
</dbReference>
<dbReference type="FunFam" id="1.20.200.10:FF:000015">
    <property type="entry name" value="argininosuccinate lyase isoform X2"/>
    <property type="match status" value="1"/>
</dbReference>
<dbReference type="Gene3D" id="1.10.40.30">
    <property type="entry name" value="Fumarase/aspartase (C-terminal domain)"/>
    <property type="match status" value="1"/>
</dbReference>
<dbReference type="Gene3D" id="1.20.200.10">
    <property type="entry name" value="Fumarase/aspartase (Central domain)"/>
    <property type="match status" value="1"/>
</dbReference>
<dbReference type="Gene3D" id="1.10.275.10">
    <property type="entry name" value="Fumarase/aspartase (N-terminal domain)"/>
    <property type="match status" value="1"/>
</dbReference>
<dbReference type="HAMAP" id="MF_00006">
    <property type="entry name" value="Arg_succ_lyase"/>
    <property type="match status" value="1"/>
</dbReference>
<dbReference type="InterPro" id="IPR029419">
    <property type="entry name" value="Arg_succ_lyase_C"/>
</dbReference>
<dbReference type="InterPro" id="IPR009049">
    <property type="entry name" value="Argininosuccinate_lyase"/>
</dbReference>
<dbReference type="InterPro" id="IPR024083">
    <property type="entry name" value="Fumarase/histidase_N"/>
</dbReference>
<dbReference type="InterPro" id="IPR020557">
    <property type="entry name" value="Fumarate_lyase_CS"/>
</dbReference>
<dbReference type="InterPro" id="IPR000362">
    <property type="entry name" value="Fumarate_lyase_fam"/>
</dbReference>
<dbReference type="InterPro" id="IPR022761">
    <property type="entry name" value="Fumarate_lyase_N"/>
</dbReference>
<dbReference type="InterPro" id="IPR008948">
    <property type="entry name" value="L-Aspartase-like"/>
</dbReference>
<dbReference type="NCBIfam" id="TIGR00838">
    <property type="entry name" value="argH"/>
    <property type="match status" value="1"/>
</dbReference>
<dbReference type="PANTHER" id="PTHR43814">
    <property type="entry name" value="ARGININOSUCCINATE LYASE"/>
    <property type="match status" value="1"/>
</dbReference>
<dbReference type="PANTHER" id="PTHR43814:SF1">
    <property type="entry name" value="ARGININOSUCCINATE LYASE"/>
    <property type="match status" value="1"/>
</dbReference>
<dbReference type="Pfam" id="PF14698">
    <property type="entry name" value="ASL_C2"/>
    <property type="match status" value="1"/>
</dbReference>
<dbReference type="Pfam" id="PF00206">
    <property type="entry name" value="Lyase_1"/>
    <property type="match status" value="1"/>
</dbReference>
<dbReference type="PRINTS" id="PR00145">
    <property type="entry name" value="ARGSUCLYASE"/>
</dbReference>
<dbReference type="PRINTS" id="PR00149">
    <property type="entry name" value="FUMRATELYASE"/>
</dbReference>
<dbReference type="SUPFAM" id="SSF48557">
    <property type="entry name" value="L-aspartase-like"/>
    <property type="match status" value="1"/>
</dbReference>
<dbReference type="PROSITE" id="PS00163">
    <property type="entry name" value="FUMARATE_LYASES"/>
    <property type="match status" value="1"/>
</dbReference>
<organism>
    <name type="scientific">Acidothermus cellulolyticus (strain ATCC 43068 / DSM 8971 / 11B)</name>
    <dbReference type="NCBI Taxonomy" id="351607"/>
    <lineage>
        <taxon>Bacteria</taxon>
        <taxon>Bacillati</taxon>
        <taxon>Actinomycetota</taxon>
        <taxon>Actinomycetes</taxon>
        <taxon>Acidothermales</taxon>
        <taxon>Acidothermaceae</taxon>
        <taxon>Acidothermus</taxon>
    </lineage>
</organism>
<proteinExistence type="inferred from homology"/>
<feature type="chain" id="PRO_0000321423" description="Argininosuccinate lyase">
    <location>
        <begin position="1"/>
        <end position="489"/>
    </location>
</feature>
<feature type="region of interest" description="Disordered" evidence="2">
    <location>
        <begin position="1"/>
        <end position="20"/>
    </location>
</feature>
<comment type="catalytic activity">
    <reaction evidence="1">
        <text>2-(N(omega)-L-arginino)succinate = fumarate + L-arginine</text>
        <dbReference type="Rhea" id="RHEA:24020"/>
        <dbReference type="ChEBI" id="CHEBI:29806"/>
        <dbReference type="ChEBI" id="CHEBI:32682"/>
        <dbReference type="ChEBI" id="CHEBI:57472"/>
        <dbReference type="EC" id="4.3.2.1"/>
    </reaction>
</comment>
<comment type="pathway">
    <text evidence="1">Amino-acid biosynthesis; L-arginine biosynthesis; L-arginine from L-ornithine and carbamoyl phosphate: step 3/3.</text>
</comment>
<comment type="subcellular location">
    <subcellularLocation>
        <location evidence="1">Cytoplasm</location>
    </subcellularLocation>
</comment>
<comment type="similarity">
    <text evidence="1">Belongs to the lyase 1 family. Argininosuccinate lyase subfamily.</text>
</comment>
<accession>A0LUB8</accession>
<reference key="1">
    <citation type="journal article" date="2009" name="Genome Res.">
        <title>Complete genome of the cellulolytic thermophile Acidothermus cellulolyticus 11B provides insights into its ecophysiological and evolutionary adaptations.</title>
        <authorList>
            <person name="Barabote R.D."/>
            <person name="Xie G."/>
            <person name="Leu D.H."/>
            <person name="Normand P."/>
            <person name="Necsulea A."/>
            <person name="Daubin V."/>
            <person name="Medigue C."/>
            <person name="Adney W.S."/>
            <person name="Xu X.C."/>
            <person name="Lapidus A."/>
            <person name="Parales R.E."/>
            <person name="Detter C."/>
            <person name="Pujic P."/>
            <person name="Bruce D."/>
            <person name="Lavire C."/>
            <person name="Challacombe J.F."/>
            <person name="Brettin T.S."/>
            <person name="Berry A.M."/>
        </authorList>
    </citation>
    <scope>NUCLEOTIDE SEQUENCE [LARGE SCALE GENOMIC DNA]</scope>
    <source>
        <strain>ATCC 43068 / DSM 8971 / 11B</strain>
    </source>
</reference>
<name>ARLY_ACIC1</name>
<protein>
    <recommendedName>
        <fullName evidence="1">Argininosuccinate lyase</fullName>
        <shortName evidence="1">ASAL</shortName>
        <ecNumber evidence="1">4.3.2.1</ecNumber>
    </recommendedName>
    <alternativeName>
        <fullName evidence="1">Arginosuccinase</fullName>
    </alternativeName>
</protein>
<keyword id="KW-0028">Amino-acid biosynthesis</keyword>
<keyword id="KW-0055">Arginine biosynthesis</keyword>
<keyword id="KW-0963">Cytoplasm</keyword>
<keyword id="KW-0456">Lyase</keyword>
<keyword id="KW-1185">Reference proteome</keyword>
<sequence>MSEPSAAVGQRPGGESAPAHRLWGGRFTAGPAESVAALSRSIDVDWRLARYDLRASKAHARVLAAAGLLDADELAQLLAALDELDRACASGTFQPAAADEDVHTALERALLERLGPLGGKLRAGRSRNDQIATDLRLYLRDHVRLLVRRLVDLQWALVDQAERHLDLPAPGMTHLQHAQPVLFAHHLLAHVAAFARDVDRFRDWDRRAAICPLGAGALAGSSLPLDPHAVAAELGFTAPAANSIDAVSDRDFAAEFAFAAALVGVHLSRLGEEIVLWCSQEFGWVELDDAYATGSSIMPQKKNPDVAELARGKAGRLIGNLTSLLTMLKGLPLAYDRDLQEDKFPVFDSLDTLLLVLPAMTGLVATMRVKADRVAAAAPAGFSLATDVAEALVRRGVPFHEAHQAVGRLVAWCAAHGTDLSAVDDDQLAEISPYFTPENRAEVRTVLSVRGAIGARAAYGGTAPERVAEQLAAVRAALADSAAWADAAP</sequence>
<evidence type="ECO:0000255" key="1">
    <source>
        <dbReference type="HAMAP-Rule" id="MF_00006"/>
    </source>
</evidence>
<evidence type="ECO:0000256" key="2">
    <source>
        <dbReference type="SAM" id="MobiDB-lite"/>
    </source>
</evidence>
<gene>
    <name evidence="1" type="primary">argH</name>
    <name type="ordered locus">Acel_1256</name>
</gene>